<accession>B0REV4</accession>
<gene>
    <name evidence="1" type="primary">metK</name>
    <name type="ordered locus">CMS2024</name>
</gene>
<name>METK_CLASE</name>
<evidence type="ECO:0000255" key="1">
    <source>
        <dbReference type="HAMAP-Rule" id="MF_00086"/>
    </source>
</evidence>
<evidence type="ECO:0000256" key="2">
    <source>
        <dbReference type="SAM" id="MobiDB-lite"/>
    </source>
</evidence>
<proteinExistence type="inferred from homology"/>
<reference key="1">
    <citation type="journal article" date="2008" name="J. Bacteriol.">
        <title>Genome of the actinomycete plant pathogen Clavibacter michiganensis subsp. sepedonicus suggests recent niche adaptation.</title>
        <authorList>
            <person name="Bentley S.D."/>
            <person name="Corton C."/>
            <person name="Brown S.E."/>
            <person name="Barron A."/>
            <person name="Clark L."/>
            <person name="Doggett J."/>
            <person name="Harris B."/>
            <person name="Ormond D."/>
            <person name="Quail M.A."/>
            <person name="May G."/>
            <person name="Francis D."/>
            <person name="Knudson D."/>
            <person name="Parkhill J."/>
            <person name="Ishimaru C.A."/>
        </authorList>
    </citation>
    <scope>NUCLEOTIDE SEQUENCE [LARGE SCALE GENOMIC DNA]</scope>
    <source>
        <strain>ATCC 33113 / DSM 20744 / JCM 9667 / LMG 2889 / ICMP 2535 / C-1</strain>
    </source>
</reference>
<protein>
    <recommendedName>
        <fullName evidence="1">S-adenosylmethionine synthase</fullName>
        <shortName evidence="1">AdoMet synthase</shortName>
        <ecNumber evidence="1">2.5.1.6</ecNumber>
    </recommendedName>
    <alternativeName>
        <fullName evidence="1">MAT</fullName>
    </alternativeName>
    <alternativeName>
        <fullName evidence="1">Methionine adenosyltransferase</fullName>
    </alternativeName>
</protein>
<feature type="chain" id="PRO_1000075368" description="S-adenosylmethionine synthase">
    <location>
        <begin position="1"/>
        <end position="403"/>
    </location>
</feature>
<feature type="region of interest" description="Flexible loop" evidence="1">
    <location>
        <begin position="100"/>
        <end position="110"/>
    </location>
</feature>
<feature type="region of interest" description="Disordered" evidence="2">
    <location>
        <begin position="106"/>
        <end position="126"/>
    </location>
</feature>
<feature type="binding site" description="in other chain" evidence="1">
    <location>
        <position position="16"/>
    </location>
    <ligand>
        <name>ATP</name>
        <dbReference type="ChEBI" id="CHEBI:30616"/>
        <note>ligand shared between two neighboring subunits</note>
    </ligand>
</feature>
<feature type="binding site" evidence="1">
    <location>
        <position position="18"/>
    </location>
    <ligand>
        <name>Mg(2+)</name>
        <dbReference type="ChEBI" id="CHEBI:18420"/>
    </ligand>
</feature>
<feature type="binding site" evidence="1">
    <location>
        <position position="44"/>
    </location>
    <ligand>
        <name>K(+)</name>
        <dbReference type="ChEBI" id="CHEBI:29103"/>
    </ligand>
</feature>
<feature type="binding site" description="in other chain" evidence="1">
    <location>
        <position position="57"/>
    </location>
    <ligand>
        <name>L-methionine</name>
        <dbReference type="ChEBI" id="CHEBI:57844"/>
        <note>ligand shared between two neighboring subunits</note>
    </ligand>
</feature>
<feature type="binding site" description="in other chain" evidence="1">
    <location>
        <position position="100"/>
    </location>
    <ligand>
        <name>L-methionine</name>
        <dbReference type="ChEBI" id="CHEBI:57844"/>
        <note>ligand shared between two neighboring subunits</note>
    </ligand>
</feature>
<feature type="binding site" description="in other chain" evidence="1">
    <location>
        <begin position="176"/>
        <end position="178"/>
    </location>
    <ligand>
        <name>ATP</name>
        <dbReference type="ChEBI" id="CHEBI:30616"/>
        <note>ligand shared between two neighboring subunits</note>
    </ligand>
</feature>
<feature type="binding site" description="in other chain" evidence="1">
    <location>
        <begin position="248"/>
        <end position="249"/>
    </location>
    <ligand>
        <name>ATP</name>
        <dbReference type="ChEBI" id="CHEBI:30616"/>
        <note>ligand shared between two neighboring subunits</note>
    </ligand>
</feature>
<feature type="binding site" evidence="1">
    <location>
        <position position="257"/>
    </location>
    <ligand>
        <name>ATP</name>
        <dbReference type="ChEBI" id="CHEBI:30616"/>
        <note>ligand shared between two neighboring subunits</note>
    </ligand>
</feature>
<feature type="binding site" evidence="1">
    <location>
        <position position="257"/>
    </location>
    <ligand>
        <name>L-methionine</name>
        <dbReference type="ChEBI" id="CHEBI:57844"/>
        <note>ligand shared between two neighboring subunits</note>
    </ligand>
</feature>
<feature type="binding site" description="in other chain" evidence="1">
    <location>
        <begin position="263"/>
        <end position="264"/>
    </location>
    <ligand>
        <name>ATP</name>
        <dbReference type="ChEBI" id="CHEBI:30616"/>
        <note>ligand shared between two neighboring subunits</note>
    </ligand>
</feature>
<feature type="binding site" evidence="1">
    <location>
        <position position="280"/>
    </location>
    <ligand>
        <name>ATP</name>
        <dbReference type="ChEBI" id="CHEBI:30616"/>
        <note>ligand shared between two neighboring subunits</note>
    </ligand>
</feature>
<feature type="binding site" evidence="1">
    <location>
        <position position="284"/>
    </location>
    <ligand>
        <name>ATP</name>
        <dbReference type="ChEBI" id="CHEBI:30616"/>
        <note>ligand shared between two neighboring subunits</note>
    </ligand>
</feature>
<feature type="binding site" description="in other chain" evidence="1">
    <location>
        <position position="288"/>
    </location>
    <ligand>
        <name>L-methionine</name>
        <dbReference type="ChEBI" id="CHEBI:57844"/>
        <note>ligand shared between two neighboring subunits</note>
    </ligand>
</feature>
<sequence length="403" mass="43188">MTDLRLFTSESVTEGHPDKICDQISDSILDALLTQDPSSRAAVETLVTTGLVHVAGEVTTSGYVDIPQIVRDRIRDIGYDSSEVGFDGSNCGVTVSIGAQSPDIAQGVDRSYESRSGSASTDAHDLQGAGDQGLMFGYASRDTPVFMPLPIYLAHRLAERLAAVRHSGELSYLRPDGKTQVTIGYEGLVPRTVDTVVLSTQHGPQVSQEDLRREVEEHVIRPVLAAAAEIGIELDSRDATLLINPTGKFEIGGPKGDAGLTGRKIIVDTYGGFSRHGGGAFSGKDPSKVDRSAAYAMRWVAKNAVAAGLADRLEVQVAYAIGKAAPVGLYVEAFGTAHVPEDRIVRAIRETFDLRPAAIVERLDLLRPIYAETAAYGHFGRELPDFTWEALDRVADLQSAAGL</sequence>
<keyword id="KW-0067">ATP-binding</keyword>
<keyword id="KW-0963">Cytoplasm</keyword>
<keyword id="KW-0460">Magnesium</keyword>
<keyword id="KW-0479">Metal-binding</keyword>
<keyword id="KW-0547">Nucleotide-binding</keyword>
<keyword id="KW-0554">One-carbon metabolism</keyword>
<keyword id="KW-0630">Potassium</keyword>
<keyword id="KW-0808">Transferase</keyword>
<dbReference type="EC" id="2.5.1.6" evidence="1"/>
<dbReference type="EMBL" id="AM849034">
    <property type="protein sequence ID" value="CAQ02120.1"/>
    <property type="molecule type" value="Genomic_DNA"/>
</dbReference>
<dbReference type="RefSeq" id="WP_012299347.1">
    <property type="nucleotide sequence ID" value="NZ_MZMN01000003.1"/>
</dbReference>
<dbReference type="SMR" id="B0REV4"/>
<dbReference type="STRING" id="31964.CMS2024"/>
<dbReference type="KEGG" id="cms:CMS2024"/>
<dbReference type="eggNOG" id="COG0192">
    <property type="taxonomic scope" value="Bacteria"/>
</dbReference>
<dbReference type="HOGENOM" id="CLU_041802_1_1_11"/>
<dbReference type="OrthoDB" id="9801686at2"/>
<dbReference type="UniPathway" id="UPA00315">
    <property type="reaction ID" value="UER00080"/>
</dbReference>
<dbReference type="Proteomes" id="UP000001318">
    <property type="component" value="Chromosome"/>
</dbReference>
<dbReference type="GO" id="GO:0005737">
    <property type="term" value="C:cytoplasm"/>
    <property type="evidence" value="ECO:0007669"/>
    <property type="project" value="UniProtKB-SubCell"/>
</dbReference>
<dbReference type="GO" id="GO:0005524">
    <property type="term" value="F:ATP binding"/>
    <property type="evidence" value="ECO:0007669"/>
    <property type="project" value="UniProtKB-UniRule"/>
</dbReference>
<dbReference type="GO" id="GO:0000287">
    <property type="term" value="F:magnesium ion binding"/>
    <property type="evidence" value="ECO:0007669"/>
    <property type="project" value="UniProtKB-UniRule"/>
</dbReference>
<dbReference type="GO" id="GO:0004478">
    <property type="term" value="F:methionine adenosyltransferase activity"/>
    <property type="evidence" value="ECO:0007669"/>
    <property type="project" value="UniProtKB-UniRule"/>
</dbReference>
<dbReference type="GO" id="GO:0006730">
    <property type="term" value="P:one-carbon metabolic process"/>
    <property type="evidence" value="ECO:0007669"/>
    <property type="project" value="UniProtKB-KW"/>
</dbReference>
<dbReference type="GO" id="GO:0006556">
    <property type="term" value="P:S-adenosylmethionine biosynthetic process"/>
    <property type="evidence" value="ECO:0007669"/>
    <property type="project" value="UniProtKB-UniRule"/>
</dbReference>
<dbReference type="CDD" id="cd18079">
    <property type="entry name" value="S-AdoMet_synt"/>
    <property type="match status" value="1"/>
</dbReference>
<dbReference type="FunFam" id="3.30.300.10:FF:000003">
    <property type="entry name" value="S-adenosylmethionine synthase"/>
    <property type="match status" value="1"/>
</dbReference>
<dbReference type="Gene3D" id="3.30.300.10">
    <property type="match status" value="3"/>
</dbReference>
<dbReference type="HAMAP" id="MF_00086">
    <property type="entry name" value="S_AdoMet_synth1"/>
    <property type="match status" value="1"/>
</dbReference>
<dbReference type="InterPro" id="IPR022631">
    <property type="entry name" value="ADOMET_SYNTHASE_CS"/>
</dbReference>
<dbReference type="InterPro" id="IPR022630">
    <property type="entry name" value="S-AdoMet_synt_C"/>
</dbReference>
<dbReference type="InterPro" id="IPR022629">
    <property type="entry name" value="S-AdoMet_synt_central"/>
</dbReference>
<dbReference type="InterPro" id="IPR022628">
    <property type="entry name" value="S-AdoMet_synt_N"/>
</dbReference>
<dbReference type="InterPro" id="IPR002133">
    <property type="entry name" value="S-AdoMet_synthetase"/>
</dbReference>
<dbReference type="InterPro" id="IPR022636">
    <property type="entry name" value="S-AdoMet_synthetase_sfam"/>
</dbReference>
<dbReference type="NCBIfam" id="TIGR01034">
    <property type="entry name" value="metK"/>
    <property type="match status" value="1"/>
</dbReference>
<dbReference type="PANTHER" id="PTHR11964">
    <property type="entry name" value="S-ADENOSYLMETHIONINE SYNTHETASE"/>
    <property type="match status" value="1"/>
</dbReference>
<dbReference type="Pfam" id="PF02773">
    <property type="entry name" value="S-AdoMet_synt_C"/>
    <property type="match status" value="1"/>
</dbReference>
<dbReference type="Pfam" id="PF02772">
    <property type="entry name" value="S-AdoMet_synt_M"/>
    <property type="match status" value="1"/>
</dbReference>
<dbReference type="Pfam" id="PF00438">
    <property type="entry name" value="S-AdoMet_synt_N"/>
    <property type="match status" value="1"/>
</dbReference>
<dbReference type="PIRSF" id="PIRSF000497">
    <property type="entry name" value="MAT"/>
    <property type="match status" value="1"/>
</dbReference>
<dbReference type="SUPFAM" id="SSF55973">
    <property type="entry name" value="S-adenosylmethionine synthetase"/>
    <property type="match status" value="3"/>
</dbReference>
<dbReference type="PROSITE" id="PS00376">
    <property type="entry name" value="ADOMET_SYNTHASE_1"/>
    <property type="match status" value="1"/>
</dbReference>
<dbReference type="PROSITE" id="PS00377">
    <property type="entry name" value="ADOMET_SYNTHASE_2"/>
    <property type="match status" value="1"/>
</dbReference>
<comment type="function">
    <text evidence="1">Catalyzes the formation of S-adenosylmethionine (AdoMet) from methionine and ATP. The overall synthetic reaction is composed of two sequential steps, AdoMet formation and the subsequent tripolyphosphate hydrolysis which occurs prior to release of AdoMet from the enzyme.</text>
</comment>
<comment type="catalytic activity">
    <reaction evidence="1">
        <text>L-methionine + ATP + H2O = S-adenosyl-L-methionine + phosphate + diphosphate</text>
        <dbReference type="Rhea" id="RHEA:21080"/>
        <dbReference type="ChEBI" id="CHEBI:15377"/>
        <dbReference type="ChEBI" id="CHEBI:30616"/>
        <dbReference type="ChEBI" id="CHEBI:33019"/>
        <dbReference type="ChEBI" id="CHEBI:43474"/>
        <dbReference type="ChEBI" id="CHEBI:57844"/>
        <dbReference type="ChEBI" id="CHEBI:59789"/>
        <dbReference type="EC" id="2.5.1.6"/>
    </reaction>
</comment>
<comment type="cofactor">
    <cofactor evidence="1">
        <name>Mg(2+)</name>
        <dbReference type="ChEBI" id="CHEBI:18420"/>
    </cofactor>
    <text evidence="1">Binds 2 divalent ions per subunit.</text>
</comment>
<comment type="cofactor">
    <cofactor evidence="1">
        <name>K(+)</name>
        <dbReference type="ChEBI" id="CHEBI:29103"/>
    </cofactor>
    <text evidence="1">Binds 1 potassium ion per subunit.</text>
</comment>
<comment type="pathway">
    <text evidence="1">Amino-acid biosynthesis; S-adenosyl-L-methionine biosynthesis; S-adenosyl-L-methionine from L-methionine: step 1/1.</text>
</comment>
<comment type="subunit">
    <text evidence="1">Homotetramer; dimer of dimers.</text>
</comment>
<comment type="subcellular location">
    <subcellularLocation>
        <location evidence="1">Cytoplasm</location>
    </subcellularLocation>
</comment>
<comment type="similarity">
    <text evidence="1">Belongs to the AdoMet synthase family.</text>
</comment>
<organism>
    <name type="scientific">Clavibacter sepedonicus</name>
    <name type="common">Clavibacter michiganensis subsp. sepedonicus</name>
    <dbReference type="NCBI Taxonomy" id="31964"/>
    <lineage>
        <taxon>Bacteria</taxon>
        <taxon>Bacillati</taxon>
        <taxon>Actinomycetota</taxon>
        <taxon>Actinomycetes</taxon>
        <taxon>Micrococcales</taxon>
        <taxon>Microbacteriaceae</taxon>
        <taxon>Clavibacter</taxon>
    </lineage>
</organism>